<organism>
    <name type="scientific">Helicobacter pylori (strain ATCC 700392 / 26695)</name>
    <name type="common">Campylobacter pylori</name>
    <dbReference type="NCBI Taxonomy" id="85962"/>
    <lineage>
        <taxon>Bacteria</taxon>
        <taxon>Pseudomonadati</taxon>
        <taxon>Campylobacterota</taxon>
        <taxon>Epsilonproteobacteria</taxon>
        <taxon>Campylobacterales</taxon>
        <taxon>Helicobacteraceae</taxon>
        <taxon>Helicobacter</taxon>
    </lineage>
</organism>
<sequence length="414" mass="48173">MAILRANLSPKNKLNATLKGWLPILQSELEDLEEVLKQNALDNPLIKIENKRIKNFSDRFSAKKSSDHLENFATASKSLFETLEAQIIPPLFPTETSQKIAMDIISGLNNEGYFEENIEERARILGVESEVYEKVRKRFSYLNPAGIGAKDVKESFLFQLESRELDDNELYEETRKIILNLEKHHEFSKDFYYEKALKILKSFKNPPAIEFLEKEIEVIPELFIVEVDNGIIVRLNDESYPTISLEENRFKDSGYLKEKLKEAKDLIDALNLRKATIYKIGLMLLEYQYDFFKGKELRPLKLLDLANEFNHSVSTISRAISNKYLACERGVFPIKHFFSIALDNSETSNAVIKDYLLELIKNEDKKEPLSDAKILELIEEKFHLKMVRRTITKYRQLLNIASSSERKRLYLMRA</sequence>
<gene>
    <name type="primary">rpoN</name>
    <name type="ordered locus">HP_0714</name>
</gene>
<protein>
    <recommendedName>
        <fullName>RNA polymerase sigma-54 factor</fullName>
    </recommendedName>
</protein>
<keyword id="KW-0238">DNA-binding</keyword>
<keyword id="KW-0240">DNA-directed RNA polymerase</keyword>
<keyword id="KW-0548">Nucleotidyltransferase</keyword>
<keyword id="KW-1185">Reference proteome</keyword>
<keyword id="KW-0731">Sigma factor</keyword>
<keyword id="KW-0804">Transcription</keyword>
<keyword id="KW-0805">Transcription regulation</keyword>
<keyword id="KW-0808">Transferase</keyword>
<comment type="function">
    <text>Sigma factors are initiation factors that promote the attachment of RNA polymerase to specific initiation sites and are then released.</text>
</comment>
<comment type="similarity">
    <text evidence="2">Belongs to the sigma-54 factor family.</text>
</comment>
<name>RP54_HELPY</name>
<proteinExistence type="inferred from homology"/>
<reference key="1">
    <citation type="journal article" date="1997" name="Nature">
        <title>The complete genome sequence of the gastric pathogen Helicobacter pylori.</title>
        <authorList>
            <person name="Tomb J.-F."/>
            <person name="White O."/>
            <person name="Kerlavage A.R."/>
            <person name="Clayton R.A."/>
            <person name="Sutton G.G."/>
            <person name="Fleischmann R.D."/>
            <person name="Ketchum K.A."/>
            <person name="Klenk H.-P."/>
            <person name="Gill S.R."/>
            <person name="Dougherty B.A."/>
            <person name="Nelson K.E."/>
            <person name="Quackenbush J."/>
            <person name="Zhou L."/>
            <person name="Kirkness E.F."/>
            <person name="Peterson S.N."/>
            <person name="Loftus B.J."/>
            <person name="Richardson D.L."/>
            <person name="Dodson R.J."/>
            <person name="Khalak H.G."/>
            <person name="Glodek A."/>
            <person name="McKenney K."/>
            <person name="FitzGerald L.M."/>
            <person name="Lee N."/>
            <person name="Adams M.D."/>
            <person name="Hickey E.K."/>
            <person name="Berg D.E."/>
            <person name="Gocayne J.D."/>
            <person name="Utterback T.R."/>
            <person name="Peterson J.D."/>
            <person name="Kelley J.M."/>
            <person name="Cotton M.D."/>
            <person name="Weidman J.F."/>
            <person name="Fujii C."/>
            <person name="Bowman C."/>
            <person name="Watthey L."/>
            <person name="Wallin E."/>
            <person name="Hayes W.S."/>
            <person name="Borodovsky M."/>
            <person name="Karp P.D."/>
            <person name="Smith H.O."/>
            <person name="Fraser C.M."/>
            <person name="Venter J.C."/>
        </authorList>
    </citation>
    <scope>NUCLEOTIDE SEQUENCE [LARGE SCALE GENOMIC DNA]</scope>
    <source>
        <strain>ATCC 700392 / 26695</strain>
    </source>
</reference>
<accession>P56143</accession>
<dbReference type="EMBL" id="AE000511">
    <property type="protein sequence ID" value="AAD07764.1"/>
    <property type="molecule type" value="Genomic_DNA"/>
</dbReference>
<dbReference type="PIR" id="B64609">
    <property type="entry name" value="B64609"/>
</dbReference>
<dbReference type="RefSeq" id="NP_207508.1">
    <property type="nucleotide sequence ID" value="NC_000915.1"/>
</dbReference>
<dbReference type="RefSeq" id="WP_000996418.1">
    <property type="nucleotide sequence ID" value="NC_018939.1"/>
</dbReference>
<dbReference type="SMR" id="P56143"/>
<dbReference type="DIP" id="DIP-3064N"/>
<dbReference type="FunCoup" id="P56143">
    <property type="interactions" value="131"/>
</dbReference>
<dbReference type="IntAct" id="P56143">
    <property type="interactions" value="11"/>
</dbReference>
<dbReference type="MINT" id="P56143"/>
<dbReference type="STRING" id="85962.HP_0714"/>
<dbReference type="PaxDb" id="85962-C694_03675"/>
<dbReference type="EnsemblBacteria" id="AAD07764">
    <property type="protein sequence ID" value="AAD07764"/>
    <property type="gene ID" value="HP_0714"/>
</dbReference>
<dbReference type="KEGG" id="heo:C694_03675"/>
<dbReference type="KEGG" id="hpy:HP_0714"/>
<dbReference type="PATRIC" id="fig|85962.47.peg.763"/>
<dbReference type="eggNOG" id="COG1508">
    <property type="taxonomic scope" value="Bacteria"/>
</dbReference>
<dbReference type="InParanoid" id="P56143"/>
<dbReference type="OrthoDB" id="9814402at2"/>
<dbReference type="PhylomeDB" id="P56143"/>
<dbReference type="Proteomes" id="UP000000429">
    <property type="component" value="Chromosome"/>
</dbReference>
<dbReference type="GO" id="GO:0000428">
    <property type="term" value="C:DNA-directed RNA polymerase complex"/>
    <property type="evidence" value="ECO:0007669"/>
    <property type="project" value="UniProtKB-KW"/>
</dbReference>
<dbReference type="GO" id="GO:0032993">
    <property type="term" value="C:protein-DNA complex"/>
    <property type="evidence" value="ECO:0000318"/>
    <property type="project" value="GO_Central"/>
</dbReference>
<dbReference type="GO" id="GO:0001216">
    <property type="term" value="F:DNA-binding transcription activator activity"/>
    <property type="evidence" value="ECO:0000318"/>
    <property type="project" value="GO_Central"/>
</dbReference>
<dbReference type="GO" id="GO:0016779">
    <property type="term" value="F:nucleotidyltransferase activity"/>
    <property type="evidence" value="ECO:0007669"/>
    <property type="project" value="UniProtKB-KW"/>
</dbReference>
<dbReference type="GO" id="GO:0016987">
    <property type="term" value="F:sigma factor activity"/>
    <property type="evidence" value="ECO:0007669"/>
    <property type="project" value="UniProtKB-KW"/>
</dbReference>
<dbReference type="GO" id="GO:0000976">
    <property type="term" value="F:transcription cis-regulatory region binding"/>
    <property type="evidence" value="ECO:0000318"/>
    <property type="project" value="GO_Central"/>
</dbReference>
<dbReference type="GO" id="GO:0006352">
    <property type="term" value="P:DNA-templated transcription initiation"/>
    <property type="evidence" value="ECO:0007669"/>
    <property type="project" value="InterPro"/>
</dbReference>
<dbReference type="GO" id="GO:0006355">
    <property type="term" value="P:regulation of DNA-templated transcription"/>
    <property type="evidence" value="ECO:0000318"/>
    <property type="project" value="GO_Central"/>
</dbReference>
<dbReference type="Gene3D" id="1.10.10.60">
    <property type="entry name" value="Homeodomain-like"/>
    <property type="match status" value="1"/>
</dbReference>
<dbReference type="Gene3D" id="1.10.10.1330">
    <property type="entry name" value="RNA polymerase sigma-54 factor, core-binding domain"/>
    <property type="match status" value="1"/>
</dbReference>
<dbReference type="InterPro" id="IPR000394">
    <property type="entry name" value="RNA_pol_sigma_54"/>
</dbReference>
<dbReference type="InterPro" id="IPR007046">
    <property type="entry name" value="RNA_pol_sigma_54_core-bd"/>
</dbReference>
<dbReference type="InterPro" id="IPR007634">
    <property type="entry name" value="RNA_pol_sigma_54_DNA-bd"/>
</dbReference>
<dbReference type="InterPro" id="IPR038709">
    <property type="entry name" value="RpoN_core-bd_sf"/>
</dbReference>
<dbReference type="NCBIfam" id="NF004602">
    <property type="entry name" value="PRK05932.2-4"/>
    <property type="match status" value="1"/>
</dbReference>
<dbReference type="NCBIfam" id="TIGR02395">
    <property type="entry name" value="rpoN_sigma"/>
    <property type="match status" value="1"/>
</dbReference>
<dbReference type="PANTHER" id="PTHR32248">
    <property type="entry name" value="RNA POLYMERASE SIGMA-54 FACTOR"/>
    <property type="match status" value="1"/>
</dbReference>
<dbReference type="PANTHER" id="PTHR32248:SF4">
    <property type="entry name" value="RNA POLYMERASE SIGMA-54 FACTOR"/>
    <property type="match status" value="1"/>
</dbReference>
<dbReference type="Pfam" id="PF00309">
    <property type="entry name" value="Sigma54_AID"/>
    <property type="match status" value="1"/>
</dbReference>
<dbReference type="Pfam" id="PF04963">
    <property type="entry name" value="Sigma54_CBD"/>
    <property type="match status" value="1"/>
</dbReference>
<dbReference type="Pfam" id="PF04552">
    <property type="entry name" value="Sigma54_DBD"/>
    <property type="match status" value="1"/>
</dbReference>
<dbReference type="PIRSF" id="PIRSF000774">
    <property type="entry name" value="RpoN"/>
    <property type="match status" value="1"/>
</dbReference>
<dbReference type="PRINTS" id="PR00045">
    <property type="entry name" value="SIGMA54FCT"/>
</dbReference>
<dbReference type="PROSITE" id="PS00717">
    <property type="entry name" value="SIGMA54_1"/>
    <property type="match status" value="1"/>
</dbReference>
<dbReference type="PROSITE" id="PS00718">
    <property type="entry name" value="SIGMA54_2"/>
    <property type="match status" value="1"/>
</dbReference>
<dbReference type="PROSITE" id="PS50044">
    <property type="entry name" value="SIGMA54_3"/>
    <property type="match status" value="1"/>
</dbReference>
<evidence type="ECO:0000250" key="1"/>
<evidence type="ECO:0000305" key="2"/>
<feature type="chain" id="PRO_0000205531" description="RNA polymerase sigma-54 factor">
    <location>
        <begin position="1"/>
        <end position="414"/>
    </location>
</feature>
<feature type="DNA-binding region" description="H-T-H motif" evidence="1">
    <location>
        <begin position="301"/>
        <end position="320"/>
    </location>
</feature>
<feature type="short sequence motif" description="RPON box">
    <location>
        <begin position="387"/>
        <end position="395"/>
    </location>
</feature>